<gene>
    <name evidence="1" type="primary">dapA</name>
    <name type="ordered locus">FTN_1728</name>
</gene>
<accession>A0Q8L5</accession>
<reference key="1">
    <citation type="journal article" date="2007" name="Genome Biol.">
        <title>Comparison of Francisella tularensis genomes reveals evolutionary events associated with the emergence of human pathogenic strains.</title>
        <authorList>
            <person name="Rohmer L."/>
            <person name="Fong C."/>
            <person name="Abmayr S."/>
            <person name="Wasnick M."/>
            <person name="Larson Freeman T.J."/>
            <person name="Radey M."/>
            <person name="Guina T."/>
            <person name="Svensson K."/>
            <person name="Hayden H.S."/>
            <person name="Jacobs M."/>
            <person name="Gallagher L.A."/>
            <person name="Manoil C."/>
            <person name="Ernst R.K."/>
            <person name="Drees B."/>
            <person name="Buckley D."/>
            <person name="Haugen E."/>
            <person name="Bovee D."/>
            <person name="Zhou Y."/>
            <person name="Chang J."/>
            <person name="Levy R."/>
            <person name="Lim R."/>
            <person name="Gillett W."/>
            <person name="Guenthener D."/>
            <person name="Kang A."/>
            <person name="Shaffer S.A."/>
            <person name="Taylor G."/>
            <person name="Chen J."/>
            <person name="Gallis B."/>
            <person name="D'Argenio D.A."/>
            <person name="Forsman M."/>
            <person name="Olson M.V."/>
            <person name="Goodlett D.R."/>
            <person name="Kaul R."/>
            <person name="Miller S.I."/>
            <person name="Brittnacher M.J."/>
        </authorList>
    </citation>
    <scope>NUCLEOTIDE SEQUENCE [LARGE SCALE GENOMIC DNA]</scope>
    <source>
        <strain>U112</strain>
    </source>
</reference>
<keyword id="KW-0028">Amino-acid biosynthesis</keyword>
<keyword id="KW-0963">Cytoplasm</keyword>
<keyword id="KW-0220">Diaminopimelate biosynthesis</keyword>
<keyword id="KW-0456">Lyase</keyword>
<keyword id="KW-0457">Lysine biosynthesis</keyword>
<keyword id="KW-0704">Schiff base</keyword>
<comment type="function">
    <text evidence="1">Catalyzes the condensation of (S)-aspartate-beta-semialdehyde [(S)-ASA] and pyruvate to 4-hydroxy-tetrahydrodipicolinate (HTPA).</text>
</comment>
<comment type="catalytic activity">
    <reaction evidence="1">
        <text>L-aspartate 4-semialdehyde + pyruvate = (2S,4S)-4-hydroxy-2,3,4,5-tetrahydrodipicolinate + H2O + H(+)</text>
        <dbReference type="Rhea" id="RHEA:34171"/>
        <dbReference type="ChEBI" id="CHEBI:15361"/>
        <dbReference type="ChEBI" id="CHEBI:15377"/>
        <dbReference type="ChEBI" id="CHEBI:15378"/>
        <dbReference type="ChEBI" id="CHEBI:67139"/>
        <dbReference type="ChEBI" id="CHEBI:537519"/>
        <dbReference type="EC" id="4.3.3.7"/>
    </reaction>
</comment>
<comment type="pathway">
    <text evidence="1">Amino-acid biosynthesis; L-lysine biosynthesis via DAP pathway; (S)-tetrahydrodipicolinate from L-aspartate: step 3/4.</text>
</comment>
<comment type="subunit">
    <text evidence="1">Homotetramer; dimer of dimers.</text>
</comment>
<comment type="subcellular location">
    <subcellularLocation>
        <location evidence="1">Cytoplasm</location>
    </subcellularLocation>
</comment>
<comment type="similarity">
    <text evidence="1">Belongs to the DapA family.</text>
</comment>
<comment type="caution">
    <text evidence="2">Was originally thought to be a dihydrodipicolinate synthase (DHDPS), catalyzing the condensation of (S)-aspartate-beta-semialdehyde [(S)-ASA] and pyruvate to dihydrodipicolinate (DHDP). However, it was shown in E.coli that the product of the enzymatic reaction is not dihydrodipicolinate but in fact (4S)-4-hydroxy-2,3,4,5-tetrahydro-(2S)-dipicolinic acid (HTPA), and that the consecutive dehydration reaction leading to DHDP is not spontaneous but catalyzed by DapB.</text>
</comment>
<dbReference type="EC" id="4.3.3.7" evidence="1"/>
<dbReference type="EMBL" id="CP000439">
    <property type="protein sequence ID" value="ABK90580.1"/>
    <property type="molecule type" value="Genomic_DNA"/>
</dbReference>
<dbReference type="RefSeq" id="WP_003040695.1">
    <property type="nucleotide sequence ID" value="NC_008601.1"/>
</dbReference>
<dbReference type="SMR" id="A0Q8L5"/>
<dbReference type="KEGG" id="ftn:FTN_1728"/>
<dbReference type="KEGG" id="ftx:AW25_259"/>
<dbReference type="BioCyc" id="FTUL401614:G1G75-1789-MONOMER"/>
<dbReference type="UniPathway" id="UPA00034">
    <property type="reaction ID" value="UER00017"/>
</dbReference>
<dbReference type="Proteomes" id="UP000000762">
    <property type="component" value="Chromosome"/>
</dbReference>
<dbReference type="GO" id="GO:0005829">
    <property type="term" value="C:cytosol"/>
    <property type="evidence" value="ECO:0007669"/>
    <property type="project" value="TreeGrafter"/>
</dbReference>
<dbReference type="GO" id="GO:0008840">
    <property type="term" value="F:4-hydroxy-tetrahydrodipicolinate synthase activity"/>
    <property type="evidence" value="ECO:0007669"/>
    <property type="project" value="UniProtKB-UniRule"/>
</dbReference>
<dbReference type="GO" id="GO:0019877">
    <property type="term" value="P:diaminopimelate biosynthetic process"/>
    <property type="evidence" value="ECO:0007669"/>
    <property type="project" value="UniProtKB-UniRule"/>
</dbReference>
<dbReference type="GO" id="GO:0009089">
    <property type="term" value="P:lysine biosynthetic process via diaminopimelate"/>
    <property type="evidence" value="ECO:0007669"/>
    <property type="project" value="UniProtKB-UniRule"/>
</dbReference>
<dbReference type="Gene3D" id="3.20.20.70">
    <property type="entry name" value="Aldolase class I"/>
    <property type="match status" value="1"/>
</dbReference>
<dbReference type="HAMAP" id="MF_00418">
    <property type="entry name" value="DapA"/>
    <property type="match status" value="1"/>
</dbReference>
<dbReference type="InterPro" id="IPR013785">
    <property type="entry name" value="Aldolase_TIM"/>
</dbReference>
<dbReference type="InterPro" id="IPR005263">
    <property type="entry name" value="DapA"/>
</dbReference>
<dbReference type="InterPro" id="IPR002220">
    <property type="entry name" value="DapA-like"/>
</dbReference>
<dbReference type="InterPro" id="IPR020625">
    <property type="entry name" value="Schiff_base-form_aldolases_AS"/>
</dbReference>
<dbReference type="InterPro" id="IPR020624">
    <property type="entry name" value="Schiff_base-form_aldolases_CS"/>
</dbReference>
<dbReference type="NCBIfam" id="TIGR00674">
    <property type="entry name" value="dapA"/>
    <property type="match status" value="1"/>
</dbReference>
<dbReference type="PANTHER" id="PTHR12128:SF66">
    <property type="entry name" value="4-HYDROXY-2-OXOGLUTARATE ALDOLASE, MITOCHONDRIAL"/>
    <property type="match status" value="1"/>
</dbReference>
<dbReference type="PANTHER" id="PTHR12128">
    <property type="entry name" value="DIHYDRODIPICOLINATE SYNTHASE"/>
    <property type="match status" value="1"/>
</dbReference>
<dbReference type="Pfam" id="PF00701">
    <property type="entry name" value="DHDPS"/>
    <property type="match status" value="1"/>
</dbReference>
<dbReference type="PIRSF" id="PIRSF001365">
    <property type="entry name" value="DHDPS"/>
    <property type="match status" value="1"/>
</dbReference>
<dbReference type="PRINTS" id="PR00146">
    <property type="entry name" value="DHPICSNTHASE"/>
</dbReference>
<dbReference type="SMART" id="SM01130">
    <property type="entry name" value="DHDPS"/>
    <property type="match status" value="1"/>
</dbReference>
<dbReference type="SUPFAM" id="SSF51569">
    <property type="entry name" value="Aldolase"/>
    <property type="match status" value="1"/>
</dbReference>
<dbReference type="PROSITE" id="PS00665">
    <property type="entry name" value="DHDPS_1"/>
    <property type="match status" value="1"/>
</dbReference>
<dbReference type="PROSITE" id="PS00666">
    <property type="entry name" value="DHDPS_2"/>
    <property type="match status" value="1"/>
</dbReference>
<proteinExistence type="inferred from homology"/>
<sequence length="295" mass="32920">MSIDINNRLYTALVTPMFEDGSIDWISFEKLLKTQEYYECGVLILGSTGEALSLDFDEQCEVVRFVTNLNLSVPIMVGVGGFQLAKQLQWIEFCQTQRVDCFLVVTPLYTKPGAASQTGWFKAVLDKAERPCMLYNVPSRTGINLAEEVLTSLKKHPNLWALKEASGDIQRCARYHDLAPNLVIYSGEDGLLPELADVGARGLVSVISNVWPEQTKKYVRQSLAHEITVEDKAVWEAATRSCFSVANPIPVKVWLAHNSLITTNTLRAPLLADELQDLSLLISADSLVKDWFSHI</sequence>
<protein>
    <recommendedName>
        <fullName evidence="1">4-hydroxy-tetrahydrodipicolinate synthase</fullName>
        <shortName evidence="1">HTPA synthase</shortName>
        <ecNumber evidence="1">4.3.3.7</ecNumber>
    </recommendedName>
</protein>
<name>DAPA_FRATN</name>
<evidence type="ECO:0000255" key="1">
    <source>
        <dbReference type="HAMAP-Rule" id="MF_00418"/>
    </source>
</evidence>
<evidence type="ECO:0000305" key="2"/>
<feature type="chain" id="PRO_0000340954" description="4-hydroxy-tetrahydrodipicolinate synthase">
    <location>
        <begin position="1"/>
        <end position="295"/>
    </location>
</feature>
<feature type="active site" description="Proton donor/acceptor" evidence="1">
    <location>
        <position position="135"/>
    </location>
</feature>
<feature type="active site" description="Schiff-base intermediate with substrate" evidence="1">
    <location>
        <position position="163"/>
    </location>
</feature>
<feature type="binding site" evidence="1">
    <location>
        <position position="48"/>
    </location>
    <ligand>
        <name>pyruvate</name>
        <dbReference type="ChEBI" id="CHEBI:15361"/>
    </ligand>
</feature>
<feature type="binding site" evidence="1">
    <location>
        <position position="204"/>
    </location>
    <ligand>
        <name>pyruvate</name>
        <dbReference type="ChEBI" id="CHEBI:15361"/>
    </ligand>
</feature>
<feature type="site" description="Part of a proton relay during catalysis" evidence="1">
    <location>
        <position position="47"/>
    </location>
</feature>
<feature type="site" description="Part of a proton relay during catalysis" evidence="1">
    <location>
        <position position="109"/>
    </location>
</feature>
<organism>
    <name type="scientific">Francisella tularensis subsp. novicida (strain U112)</name>
    <dbReference type="NCBI Taxonomy" id="401614"/>
    <lineage>
        <taxon>Bacteria</taxon>
        <taxon>Pseudomonadati</taxon>
        <taxon>Pseudomonadota</taxon>
        <taxon>Gammaproteobacteria</taxon>
        <taxon>Thiotrichales</taxon>
        <taxon>Francisellaceae</taxon>
        <taxon>Francisella</taxon>
    </lineage>
</organism>